<organism>
    <name type="scientific">Pseudomonas putida (strain ATCC 47054 / DSM 6125 / CFBP 8728 / NCIMB 11950 / KT2440)</name>
    <dbReference type="NCBI Taxonomy" id="160488"/>
    <lineage>
        <taxon>Bacteria</taxon>
        <taxon>Pseudomonadati</taxon>
        <taxon>Pseudomonadota</taxon>
        <taxon>Gammaproteobacteria</taxon>
        <taxon>Pseudomonadales</taxon>
        <taxon>Pseudomonadaceae</taxon>
        <taxon>Pseudomonas</taxon>
    </lineage>
</organism>
<reference key="1">
    <citation type="journal article" date="2002" name="Environ. Microbiol.">
        <title>Complete genome sequence and comparative analysis of the metabolically versatile Pseudomonas putida KT2440.</title>
        <authorList>
            <person name="Nelson K.E."/>
            <person name="Weinel C."/>
            <person name="Paulsen I.T."/>
            <person name="Dodson R.J."/>
            <person name="Hilbert H."/>
            <person name="Martins dos Santos V.A.P."/>
            <person name="Fouts D.E."/>
            <person name="Gill S.R."/>
            <person name="Pop M."/>
            <person name="Holmes M."/>
            <person name="Brinkac L.M."/>
            <person name="Beanan M.J."/>
            <person name="DeBoy R.T."/>
            <person name="Daugherty S.C."/>
            <person name="Kolonay J.F."/>
            <person name="Madupu R."/>
            <person name="Nelson W.C."/>
            <person name="White O."/>
            <person name="Peterson J.D."/>
            <person name="Khouri H.M."/>
            <person name="Hance I."/>
            <person name="Chris Lee P."/>
            <person name="Holtzapple E.K."/>
            <person name="Scanlan D."/>
            <person name="Tran K."/>
            <person name="Moazzez A."/>
            <person name="Utterback T.R."/>
            <person name="Rizzo M."/>
            <person name="Lee K."/>
            <person name="Kosack D."/>
            <person name="Moestl D."/>
            <person name="Wedler H."/>
            <person name="Lauber J."/>
            <person name="Stjepandic D."/>
            <person name="Hoheisel J."/>
            <person name="Straetz M."/>
            <person name="Heim S."/>
            <person name="Kiewitz C."/>
            <person name="Eisen J.A."/>
            <person name="Timmis K.N."/>
            <person name="Duesterhoeft A."/>
            <person name="Tuemmler B."/>
            <person name="Fraser C.M."/>
        </authorList>
    </citation>
    <scope>NUCLEOTIDE SEQUENCE [LARGE SCALE GENOMIC DNA]</scope>
    <source>
        <strain>ATCC 47054 / DSM 6125 / CFBP 8728 / NCIMB 11950 / KT2440</strain>
    </source>
</reference>
<protein>
    <recommendedName>
        <fullName evidence="1">Aquaporin Z</fullName>
    </recommendedName>
</protein>
<keyword id="KW-0997">Cell inner membrane</keyword>
<keyword id="KW-1003">Cell membrane</keyword>
<keyword id="KW-0472">Membrane</keyword>
<keyword id="KW-1185">Reference proteome</keyword>
<keyword id="KW-0677">Repeat</keyword>
<keyword id="KW-0812">Transmembrane</keyword>
<keyword id="KW-1133">Transmembrane helix</keyword>
<keyword id="KW-0813">Transport</keyword>
<evidence type="ECO:0000255" key="1">
    <source>
        <dbReference type="HAMAP-Rule" id="MF_01146"/>
    </source>
</evidence>
<comment type="function">
    <text evidence="1">Channel that permits osmotically driven movement of water in both directions. It is involved in the osmoregulation and in the maintenance of cell turgor during volume expansion in rapidly growing cells. It mediates rapid entry or exit of water in response to abrupt changes in osmolarity.</text>
</comment>
<comment type="catalytic activity">
    <reaction evidence="1">
        <text>H2O(in) = H2O(out)</text>
        <dbReference type="Rhea" id="RHEA:29667"/>
        <dbReference type="ChEBI" id="CHEBI:15377"/>
    </reaction>
    <physiologicalReaction direction="left-to-right" evidence="1">
        <dbReference type="Rhea" id="RHEA:29668"/>
    </physiologicalReaction>
    <physiologicalReaction direction="right-to-left" evidence="1">
        <dbReference type="Rhea" id="RHEA:29669"/>
    </physiologicalReaction>
</comment>
<comment type="subunit">
    <text evidence="1">Homotetramer.</text>
</comment>
<comment type="subcellular location">
    <subcellularLocation>
        <location evidence="1">Cell inner membrane</location>
        <topology evidence="1">Multi-pass membrane protein</topology>
    </subcellularLocation>
</comment>
<comment type="domain">
    <text evidence="1">Aquaporins contain two tandem repeats each containing three membrane-spanning domains and a pore-forming loop with the signature motif Asn-Pro-Ala (NPA).</text>
</comment>
<comment type="similarity">
    <text evidence="1">Belongs to the MIP/aquaporin (TC 1.A.8) family.</text>
</comment>
<proteinExistence type="inferred from homology"/>
<accession>Q88F17</accession>
<sequence length="230" mass="23149">MSLGKRMGAELIGTFWLVLGGCGSAVLAASSPLGIGVLGVAFAFGLTVLTMAFAIGHISGCHLNPAVSFGLVVGGRFPAKELLPYVIAQVIGAILAAGVIYLIASGKAGFELSAGLASNGYADHSPGGYTLGAGFVSEVVMTAMFLVVIMGATDARAPAGFAPIAIGLALTLIHLISIPVTNTSVNPARSTGPALFVGGWALQQLWLFWVAPLIGAAIGGALYRGLAKEP</sequence>
<dbReference type="EMBL" id="AE015451">
    <property type="protein sequence ID" value="AAN69862.1"/>
    <property type="molecule type" value="Genomic_DNA"/>
</dbReference>
<dbReference type="RefSeq" id="NP_746398.1">
    <property type="nucleotide sequence ID" value="NC_002947.4"/>
</dbReference>
<dbReference type="SMR" id="Q88F17"/>
<dbReference type="STRING" id="160488.PP_4282"/>
<dbReference type="PaxDb" id="160488-PP_4282"/>
<dbReference type="KEGG" id="ppu:PP_4282"/>
<dbReference type="PATRIC" id="fig|160488.4.peg.4552"/>
<dbReference type="eggNOG" id="COG0580">
    <property type="taxonomic scope" value="Bacteria"/>
</dbReference>
<dbReference type="HOGENOM" id="CLU_020019_3_2_6"/>
<dbReference type="OrthoDB" id="9807293at2"/>
<dbReference type="PhylomeDB" id="Q88F17"/>
<dbReference type="BioCyc" id="PPUT160488:G1G01-4560-MONOMER"/>
<dbReference type="Proteomes" id="UP000000556">
    <property type="component" value="Chromosome"/>
</dbReference>
<dbReference type="GO" id="GO:0005886">
    <property type="term" value="C:plasma membrane"/>
    <property type="evidence" value="ECO:0007669"/>
    <property type="project" value="UniProtKB-SubCell"/>
</dbReference>
<dbReference type="GO" id="GO:0015250">
    <property type="term" value="F:water channel activity"/>
    <property type="evidence" value="ECO:0007669"/>
    <property type="project" value="UniProtKB-UniRule"/>
</dbReference>
<dbReference type="CDD" id="cd00333">
    <property type="entry name" value="MIP"/>
    <property type="match status" value="1"/>
</dbReference>
<dbReference type="FunFam" id="1.20.1080.10:FF:000007">
    <property type="entry name" value="Aquaporin Z"/>
    <property type="match status" value="1"/>
</dbReference>
<dbReference type="Gene3D" id="1.20.1080.10">
    <property type="entry name" value="Glycerol uptake facilitator protein"/>
    <property type="match status" value="1"/>
</dbReference>
<dbReference type="HAMAP" id="MF_01146">
    <property type="entry name" value="Aquaporin_Z"/>
    <property type="match status" value="1"/>
</dbReference>
<dbReference type="InterPro" id="IPR023271">
    <property type="entry name" value="Aquaporin-like"/>
</dbReference>
<dbReference type="InterPro" id="IPR034294">
    <property type="entry name" value="Aquaporin_transptr"/>
</dbReference>
<dbReference type="InterPro" id="IPR023743">
    <property type="entry name" value="Aquaporin_Z"/>
</dbReference>
<dbReference type="InterPro" id="IPR000425">
    <property type="entry name" value="MIP"/>
</dbReference>
<dbReference type="InterPro" id="IPR022357">
    <property type="entry name" value="MIP_CS"/>
</dbReference>
<dbReference type="NCBIfam" id="TIGR00861">
    <property type="entry name" value="MIP"/>
    <property type="match status" value="1"/>
</dbReference>
<dbReference type="NCBIfam" id="NF003838">
    <property type="entry name" value="PRK05420.1"/>
    <property type="match status" value="1"/>
</dbReference>
<dbReference type="PANTHER" id="PTHR19139">
    <property type="entry name" value="AQUAPORIN TRANSPORTER"/>
    <property type="match status" value="1"/>
</dbReference>
<dbReference type="PANTHER" id="PTHR19139:SF199">
    <property type="entry name" value="MIP17260P"/>
    <property type="match status" value="1"/>
</dbReference>
<dbReference type="Pfam" id="PF00230">
    <property type="entry name" value="MIP"/>
    <property type="match status" value="1"/>
</dbReference>
<dbReference type="PRINTS" id="PR00783">
    <property type="entry name" value="MINTRINSICP"/>
</dbReference>
<dbReference type="SUPFAM" id="SSF81338">
    <property type="entry name" value="Aquaporin-like"/>
    <property type="match status" value="1"/>
</dbReference>
<dbReference type="PROSITE" id="PS00221">
    <property type="entry name" value="MIP"/>
    <property type="match status" value="1"/>
</dbReference>
<gene>
    <name evidence="1" type="primary">aqpZ</name>
    <name type="ordered locus">PP_4282</name>
</gene>
<name>AQPZ_PSEPK</name>
<feature type="chain" id="PRO_0000063995" description="Aquaporin Z">
    <location>
        <begin position="1"/>
        <end position="230"/>
    </location>
</feature>
<feature type="transmembrane region" description="Helical" evidence="1">
    <location>
        <begin position="9"/>
        <end position="29"/>
    </location>
</feature>
<feature type="transmembrane region" description="Helical" evidence="1">
    <location>
        <begin position="35"/>
        <end position="55"/>
    </location>
</feature>
<feature type="transmembrane region" description="Helical" evidence="1">
    <location>
        <begin position="83"/>
        <end position="103"/>
    </location>
</feature>
<feature type="transmembrane region" description="Helical" evidence="1">
    <location>
        <begin position="131"/>
        <end position="151"/>
    </location>
</feature>
<feature type="transmembrane region" description="Helical" evidence="1">
    <location>
        <begin position="160"/>
        <end position="180"/>
    </location>
</feature>
<feature type="transmembrane region" description="Helical" evidence="1">
    <location>
        <begin position="194"/>
        <end position="214"/>
    </location>
</feature>
<feature type="short sequence motif" description="NPA 1" evidence="1">
    <location>
        <begin position="64"/>
        <end position="66"/>
    </location>
</feature>
<feature type="short sequence motif" description="NPA 2" evidence="1">
    <location>
        <begin position="186"/>
        <end position="188"/>
    </location>
</feature>
<feature type="site" description="Involved in tetramerization or stability of the tetramer" evidence="1">
    <location>
        <position position="22"/>
    </location>
</feature>
<feature type="site" description="Selectivity filter" evidence="1">
    <location>
        <position position="44"/>
    </location>
</feature>
<feature type="site" description="Selectivity filter" evidence="1">
    <location>
        <position position="174"/>
    </location>
</feature>
<feature type="site" description="Selectivity filter" evidence="1">
    <location>
        <position position="183"/>
    </location>
</feature>
<feature type="site" description="Selectivity filter" evidence="1">
    <location>
        <position position="189"/>
    </location>
</feature>